<accession>Q69ST6</accession>
<accession>A0A0P0VKD4</accession>
<accession>B7ELS1</accession>
<gene>
    <name type="primary">PDIL1-3</name>
    <name type="ordered locus">Os02g0554900</name>
    <name type="ordered locus">LOC_Os02g34940</name>
    <name type="ORF">P0470G10.25</name>
</gene>
<name>PID13_ORYSJ</name>
<organism>
    <name type="scientific">Oryza sativa subsp. japonica</name>
    <name type="common">Rice</name>
    <dbReference type="NCBI Taxonomy" id="39947"/>
    <lineage>
        <taxon>Eukaryota</taxon>
        <taxon>Viridiplantae</taxon>
        <taxon>Streptophyta</taxon>
        <taxon>Embryophyta</taxon>
        <taxon>Tracheophyta</taxon>
        <taxon>Spermatophyta</taxon>
        <taxon>Magnoliopsida</taxon>
        <taxon>Liliopsida</taxon>
        <taxon>Poales</taxon>
        <taxon>Poaceae</taxon>
        <taxon>BOP clade</taxon>
        <taxon>Oryzoideae</taxon>
        <taxon>Oryzeae</taxon>
        <taxon>Oryzinae</taxon>
        <taxon>Oryza</taxon>
        <taxon>Oryza sativa</taxon>
    </lineage>
</organism>
<protein>
    <recommendedName>
        <fullName>Protein disulfide isomerase-like 1-3</fullName>
        <shortName>OsPDIL1-3</shortName>
        <ecNumber>5.3.4.1</ecNumber>
    </recommendedName>
</protein>
<evidence type="ECO:0000250" key="1"/>
<evidence type="ECO:0000255" key="2"/>
<evidence type="ECO:0000255" key="3">
    <source>
        <dbReference type="PROSITE-ProRule" id="PRU00691"/>
    </source>
</evidence>
<evidence type="ECO:0000255" key="4">
    <source>
        <dbReference type="PROSITE-ProRule" id="PRU10138"/>
    </source>
</evidence>
<evidence type="ECO:0000256" key="5">
    <source>
        <dbReference type="SAM" id="MobiDB-lite"/>
    </source>
</evidence>
<evidence type="ECO:0000305" key="6"/>
<comment type="function">
    <text evidence="1">Acts as a protein-folding catalyst that interacts with nascent polypeptides to catalyze the formation, isomerization, and reduction or oxidation of disulfide bonds. May play a role in storage protein biogenesis (By similarity).</text>
</comment>
<comment type="catalytic activity">
    <reaction>
        <text>Catalyzes the rearrangement of -S-S- bonds in proteins.</text>
        <dbReference type="EC" id="5.3.4.1"/>
    </reaction>
</comment>
<comment type="subcellular location">
    <subcellularLocation>
        <location evidence="6">Endoplasmic reticulum lumen</location>
    </subcellularLocation>
</comment>
<comment type="similarity">
    <text evidence="6">Belongs to the protein disulfide isomerase family.</text>
</comment>
<comment type="sequence caution" evidence="6">
    <conflict type="erroneous initiation">
        <sequence resource="EMBL-CDS" id="BAG93318"/>
    </conflict>
    <text>Truncated N-terminus.</text>
</comment>
<feature type="signal peptide">
    <location>
        <begin position="1"/>
        <end status="unknown"/>
    </location>
</feature>
<feature type="chain" id="PRO_0000400030" description="Protein disulfide isomerase-like 1-3">
    <location>
        <begin status="unknown"/>
        <end position="545"/>
    </location>
</feature>
<feature type="domain" description="Thioredoxin 1" evidence="3">
    <location>
        <begin position="55"/>
        <end position="189"/>
    </location>
</feature>
<feature type="domain" description="Thioredoxin 2" evidence="3">
    <location>
        <begin position="403"/>
        <end position="545"/>
    </location>
</feature>
<feature type="region of interest" description="Disordered" evidence="5">
    <location>
        <begin position="1"/>
        <end position="24"/>
    </location>
</feature>
<feature type="short sequence motif" description="Prevents secretion from ER" evidence="4">
    <location>
        <begin position="542"/>
        <end position="545"/>
    </location>
</feature>
<feature type="compositionally biased region" description="Pro residues" evidence="5">
    <location>
        <begin position="1"/>
        <end position="16"/>
    </location>
</feature>
<feature type="active site" description="Nucleophile" evidence="1">
    <location>
        <position position="107"/>
    </location>
</feature>
<feature type="active site" description="Nucleophile" evidence="1">
    <location>
        <position position="110"/>
    </location>
</feature>
<feature type="active site" description="Nucleophile" evidence="1">
    <location>
        <position position="453"/>
    </location>
</feature>
<feature type="active site" description="Nucleophile" evidence="1">
    <location>
        <position position="456"/>
    </location>
</feature>
<feature type="site" description="Contributes to redox potential value" evidence="1">
    <location>
        <position position="108"/>
    </location>
</feature>
<feature type="site" description="Contributes to redox potential value" evidence="1">
    <location>
        <position position="109"/>
    </location>
</feature>
<feature type="site" description="Lowers pKa of C-terminal Cys of first active site" evidence="1">
    <location>
        <position position="175"/>
    </location>
</feature>
<feature type="site" description="Contributes to redox potential value" evidence="1">
    <location>
        <position position="454"/>
    </location>
</feature>
<feature type="site" description="Contributes to redox potential value" evidence="1">
    <location>
        <position position="455"/>
    </location>
</feature>
<feature type="site" description="Lowers pKa of C-terminal Cys of second active site" evidence="1">
    <location>
        <position position="515"/>
    </location>
</feature>
<feature type="glycosylation site" description="N-linked (GlcNAc...) asparagine" evidence="2">
    <location>
        <position position="87"/>
    </location>
</feature>
<feature type="glycosylation site" description="N-linked (GlcNAc...) asparagine" evidence="2">
    <location>
        <position position="349"/>
    </location>
</feature>
<feature type="disulfide bond" description="Redox-active" evidence="3">
    <location>
        <begin position="107"/>
        <end position="110"/>
    </location>
</feature>
<feature type="disulfide bond" description="Redox-active" evidence="3">
    <location>
        <begin position="453"/>
        <end position="456"/>
    </location>
</feature>
<proteinExistence type="evidence at transcript level"/>
<dbReference type="EC" id="5.3.4.1"/>
<dbReference type="EMBL" id="AP004876">
    <property type="protein sequence ID" value="BAD33310.1"/>
    <property type="molecule type" value="Genomic_DNA"/>
</dbReference>
<dbReference type="EMBL" id="AP008208">
    <property type="protein sequence ID" value="BAF09033.1"/>
    <property type="molecule type" value="Genomic_DNA"/>
</dbReference>
<dbReference type="EMBL" id="AP014958">
    <property type="protein sequence ID" value="BAS79202.1"/>
    <property type="molecule type" value="Genomic_DNA"/>
</dbReference>
<dbReference type="EMBL" id="AK073161">
    <property type="protein sequence ID" value="BAG93318.1"/>
    <property type="status" value="ALT_INIT"/>
    <property type="molecule type" value="mRNA"/>
</dbReference>
<dbReference type="RefSeq" id="XP_015626051.1">
    <property type="nucleotide sequence ID" value="XM_015770565.1"/>
</dbReference>
<dbReference type="SMR" id="Q69ST6"/>
<dbReference type="FunCoup" id="Q69ST6">
    <property type="interactions" value="1653"/>
</dbReference>
<dbReference type="STRING" id="39947.Q69ST6"/>
<dbReference type="GlyCosmos" id="Q69ST6">
    <property type="glycosylation" value="2 sites, No reported glycans"/>
</dbReference>
<dbReference type="PaxDb" id="39947-Q69ST6"/>
<dbReference type="EnsemblPlants" id="Os02t0554900-01">
    <property type="protein sequence ID" value="Os02t0554900-01"/>
    <property type="gene ID" value="Os02g0554900"/>
</dbReference>
<dbReference type="Gramene" id="Os02t0554900-01">
    <property type="protein sequence ID" value="Os02t0554900-01"/>
    <property type="gene ID" value="Os02g0554900"/>
</dbReference>
<dbReference type="KEGG" id="dosa:Os02g0554900"/>
<dbReference type="eggNOG" id="KOG0190">
    <property type="taxonomic scope" value="Eukaryota"/>
</dbReference>
<dbReference type="HOGENOM" id="CLU_025879_6_1_1"/>
<dbReference type="InParanoid" id="Q69ST6"/>
<dbReference type="OMA" id="HEAANQY"/>
<dbReference type="OrthoDB" id="427280at2759"/>
<dbReference type="Proteomes" id="UP000000763">
    <property type="component" value="Chromosome 2"/>
</dbReference>
<dbReference type="Proteomes" id="UP000059680">
    <property type="component" value="Chromosome 2"/>
</dbReference>
<dbReference type="ExpressionAtlas" id="Q69ST6">
    <property type="expression patterns" value="baseline and differential"/>
</dbReference>
<dbReference type="GO" id="GO:0005783">
    <property type="term" value="C:endoplasmic reticulum"/>
    <property type="evidence" value="ECO:0000318"/>
    <property type="project" value="GO_Central"/>
</dbReference>
<dbReference type="GO" id="GO:0005788">
    <property type="term" value="C:endoplasmic reticulum lumen"/>
    <property type="evidence" value="ECO:0007669"/>
    <property type="project" value="UniProtKB-SubCell"/>
</dbReference>
<dbReference type="GO" id="GO:0003756">
    <property type="term" value="F:protein disulfide isomerase activity"/>
    <property type="evidence" value="ECO:0000318"/>
    <property type="project" value="GO_Central"/>
</dbReference>
<dbReference type="GO" id="GO:0006457">
    <property type="term" value="P:protein folding"/>
    <property type="evidence" value="ECO:0000318"/>
    <property type="project" value="GO_Central"/>
</dbReference>
<dbReference type="GO" id="GO:0034976">
    <property type="term" value="P:response to endoplasmic reticulum stress"/>
    <property type="evidence" value="ECO:0000318"/>
    <property type="project" value="GO_Central"/>
</dbReference>
<dbReference type="CDD" id="cd02961">
    <property type="entry name" value="PDI_a_family"/>
    <property type="match status" value="1"/>
</dbReference>
<dbReference type="CDD" id="cd02995">
    <property type="entry name" value="PDI_a_PDI_a'_C"/>
    <property type="match status" value="1"/>
</dbReference>
<dbReference type="CDD" id="cd02982">
    <property type="entry name" value="PDI_b'_family"/>
    <property type="match status" value="1"/>
</dbReference>
<dbReference type="CDD" id="cd02981">
    <property type="entry name" value="PDI_b_family"/>
    <property type="match status" value="1"/>
</dbReference>
<dbReference type="FunFam" id="3.40.30.10:FF:000143">
    <property type="entry name" value="Protein disulfide-isomerase"/>
    <property type="match status" value="1"/>
</dbReference>
<dbReference type="FunFam" id="3.40.30.10:FF:000150">
    <property type="entry name" value="Protein disulfide-isomerase"/>
    <property type="match status" value="1"/>
</dbReference>
<dbReference type="FunFam" id="3.40.30.10:FF:000152">
    <property type="entry name" value="Protein disulfide-isomerase"/>
    <property type="match status" value="1"/>
</dbReference>
<dbReference type="FunFam" id="3.40.30.10:FF:000107">
    <property type="entry name" value="Protein disulfide-isomerase 5-2"/>
    <property type="match status" value="1"/>
</dbReference>
<dbReference type="Gene3D" id="3.40.30.10">
    <property type="entry name" value="Glutaredoxin"/>
    <property type="match status" value="4"/>
</dbReference>
<dbReference type="InterPro" id="IPR005792">
    <property type="entry name" value="Prot_disulphide_isomerase"/>
</dbReference>
<dbReference type="InterPro" id="IPR036249">
    <property type="entry name" value="Thioredoxin-like_sf"/>
</dbReference>
<dbReference type="InterPro" id="IPR017937">
    <property type="entry name" value="Thioredoxin_CS"/>
</dbReference>
<dbReference type="InterPro" id="IPR013766">
    <property type="entry name" value="Thioredoxin_domain"/>
</dbReference>
<dbReference type="NCBIfam" id="TIGR01130">
    <property type="entry name" value="ER_PDI_fam"/>
    <property type="match status" value="1"/>
</dbReference>
<dbReference type="PANTHER" id="PTHR18929">
    <property type="entry name" value="PROTEIN DISULFIDE ISOMERASE"/>
    <property type="match status" value="1"/>
</dbReference>
<dbReference type="PANTHER" id="PTHR18929:SF206">
    <property type="entry name" value="PROTEIN DISULFIDE ISOMERASE-LIKE 1-3"/>
    <property type="match status" value="1"/>
</dbReference>
<dbReference type="Pfam" id="PF00085">
    <property type="entry name" value="Thioredoxin"/>
    <property type="match status" value="2"/>
</dbReference>
<dbReference type="Pfam" id="PF13848">
    <property type="entry name" value="Thioredoxin_6"/>
    <property type="match status" value="1"/>
</dbReference>
<dbReference type="PRINTS" id="PR00421">
    <property type="entry name" value="THIOREDOXIN"/>
</dbReference>
<dbReference type="SUPFAM" id="SSF52833">
    <property type="entry name" value="Thioredoxin-like"/>
    <property type="match status" value="4"/>
</dbReference>
<dbReference type="PROSITE" id="PS00014">
    <property type="entry name" value="ER_TARGET"/>
    <property type="match status" value="1"/>
</dbReference>
<dbReference type="PROSITE" id="PS00194">
    <property type="entry name" value="THIOREDOXIN_1"/>
    <property type="match status" value="2"/>
</dbReference>
<dbReference type="PROSITE" id="PS51352">
    <property type="entry name" value="THIOREDOXIN_2"/>
    <property type="match status" value="2"/>
</dbReference>
<reference key="1">
    <citation type="journal article" date="2005" name="Nature">
        <title>The map-based sequence of the rice genome.</title>
        <authorList>
            <consortium name="International rice genome sequencing project (IRGSP)"/>
        </authorList>
    </citation>
    <scope>NUCLEOTIDE SEQUENCE [LARGE SCALE GENOMIC DNA]</scope>
    <source>
        <strain>cv. Nipponbare</strain>
    </source>
</reference>
<reference key="2">
    <citation type="journal article" date="2008" name="Nucleic Acids Res.">
        <title>The rice annotation project database (RAP-DB): 2008 update.</title>
        <authorList>
            <consortium name="The rice annotation project (RAP)"/>
        </authorList>
    </citation>
    <scope>GENOME REANNOTATION</scope>
    <source>
        <strain>cv. Nipponbare</strain>
    </source>
</reference>
<reference key="3">
    <citation type="journal article" date="2013" name="Rice">
        <title>Improvement of the Oryza sativa Nipponbare reference genome using next generation sequence and optical map data.</title>
        <authorList>
            <person name="Kawahara Y."/>
            <person name="de la Bastide M."/>
            <person name="Hamilton J.P."/>
            <person name="Kanamori H."/>
            <person name="McCombie W.R."/>
            <person name="Ouyang S."/>
            <person name="Schwartz D.C."/>
            <person name="Tanaka T."/>
            <person name="Wu J."/>
            <person name="Zhou S."/>
            <person name="Childs K.L."/>
            <person name="Davidson R.M."/>
            <person name="Lin H."/>
            <person name="Quesada-Ocampo L."/>
            <person name="Vaillancourt B."/>
            <person name="Sakai H."/>
            <person name="Lee S.S."/>
            <person name="Kim J."/>
            <person name="Numa H."/>
            <person name="Itoh T."/>
            <person name="Buell C.R."/>
            <person name="Matsumoto T."/>
        </authorList>
    </citation>
    <scope>GENOME REANNOTATION</scope>
    <source>
        <strain>cv. Nipponbare</strain>
    </source>
</reference>
<reference key="4">
    <citation type="journal article" date="2003" name="Science">
        <title>Collection, mapping, and annotation of over 28,000 cDNA clones from japonica rice.</title>
        <authorList>
            <consortium name="The rice full-length cDNA consortium"/>
        </authorList>
    </citation>
    <scope>NUCLEOTIDE SEQUENCE [LARGE SCALE MRNA] OF 27-545</scope>
    <source>
        <strain>cv. Nipponbare</strain>
    </source>
</reference>
<reference key="5">
    <citation type="journal article" date="2005" name="Plant Physiol.">
        <title>Phylogenetic analyses identify 10 classes of the protein disulfide isomerase family in plants, including single-domain protein disulfide isomerase-related proteins.</title>
        <authorList>
            <person name="Houston N.L."/>
            <person name="Fan C."/>
            <person name="Xiang J.Q."/>
            <person name="Schulze J.M."/>
            <person name="Jung R."/>
            <person name="Boston R.S."/>
        </authorList>
    </citation>
    <scope>GENE FAMILY</scope>
    <scope>NOMENCLATURE</scope>
</reference>
<reference key="6">
    <citation type="journal article" date="2010" name="BMC Plant Biol.">
        <title>The protein disulfide isomerase gene family in bread wheat (T. aestivum L.).</title>
        <authorList>
            <person name="d'Aloisio E."/>
            <person name="Paolacci A.R."/>
            <person name="Dhanapal A.P."/>
            <person name="Tanzarella O.A."/>
            <person name="Porceddu E."/>
            <person name="Ciaffi M."/>
        </authorList>
    </citation>
    <scope>GENE FAMILY</scope>
    <scope>NOMENCLATURE</scope>
</reference>
<keyword id="KW-1015">Disulfide bond</keyword>
<keyword id="KW-0256">Endoplasmic reticulum</keyword>
<keyword id="KW-0325">Glycoprotein</keyword>
<keyword id="KW-0413">Isomerase</keyword>
<keyword id="KW-0676">Redox-active center</keyword>
<keyword id="KW-1185">Reference proteome</keyword>
<keyword id="KW-0677">Repeat</keyword>
<keyword id="KW-0732">Signal</keyword>
<sequence>MWPRAPATPPPPPWPSKPSAASRSALRRLDLDDGRRQGTEGEENHAPLLCSPAMASSTAFAAAFALLLLASSAAAEGEAVLTLDAGNFTEVVGAHDFIVVEFYAPWCGHCNQLAPEYEAAAAALRSHDPPVVLAKVDASADLNRGLAGEHGVQGYPTIRILRDRGARSHNYAGPRDAAGIVAYLKRQAGPASVEIAASASPPAADSIANDGVVVVGVFPELSGSEFESFMAVAEKMRADYDFRHTTDAGVLPRGDRTVRGPLVRLFKPFDELFVDSQDFDRDALEKFIESSGFPTVVTFDTSPANQKYLLKYFDNAGTKAMLFLSFSDDRAEEFRTQFHEAANQYSANNISFLIGDVTASQGAFQYFGLKESEVPLVFILASKSKYIKPTVEPDQILPYLKEFTEGTLAPHVKSEPIPEVNDQPVKTVVADNLREVVFNSGKNVLLEFYAPWCGHCQKLAPILEEVAVSLKDDEDVVIAKMDGTANDVPSDFAVEGYPSMYFYSSGGNLLPYDGRTAEEIIDFITKNKGSRPGEATTTESVKDEL</sequence>